<name>RNFB_SHESA</name>
<accession>A0KX80</accession>
<proteinExistence type="inferred from homology"/>
<protein>
    <recommendedName>
        <fullName evidence="1">Ion-translocating oxidoreductase complex subunit B</fullName>
        <ecNumber evidence="1">7.-.-.-</ecNumber>
    </recommendedName>
    <alternativeName>
        <fullName evidence="1">Rnf electron transport complex subunit B</fullName>
    </alternativeName>
</protein>
<comment type="function">
    <text evidence="1">Part of a membrane-bound complex that couples electron transfer with translocation of ions across the membrane.</text>
</comment>
<comment type="cofactor">
    <cofactor evidence="1">
        <name>[4Fe-4S] cluster</name>
        <dbReference type="ChEBI" id="CHEBI:49883"/>
    </cofactor>
    <text evidence="1">Binds 3 [4Fe-4S] clusters.</text>
</comment>
<comment type="subunit">
    <text evidence="1">The complex is composed of six subunits: RnfA, RnfB, RnfC, RnfD, RnfE and RnfG.</text>
</comment>
<comment type="subcellular location">
    <subcellularLocation>
        <location evidence="1">Cell inner membrane</location>
    </subcellularLocation>
</comment>
<comment type="similarity">
    <text evidence="1">Belongs to the 4Fe4S bacterial-type ferredoxin family. RnfB subfamily.</text>
</comment>
<sequence length="193" mass="20759">MSTMLIAVILLTLLALFFGVLLGFAALKFKVEGNPIVDELEAILPQTQCGQCGYPGCRPYAEAIANGDKVNKCPPGGTATMEKLANLMGVEPEPLNAEAQSQVKKVAYIREDECIGCTKCIQACPVDAIIGAGKLMHTVLTADCTGCDLCVEPCPVDCIDMIPVGQNLKNWNWRLNAIPVTLIQETPHEEKRG</sequence>
<keyword id="KW-0004">4Fe-4S</keyword>
<keyword id="KW-0997">Cell inner membrane</keyword>
<keyword id="KW-1003">Cell membrane</keyword>
<keyword id="KW-0249">Electron transport</keyword>
<keyword id="KW-0408">Iron</keyword>
<keyword id="KW-0411">Iron-sulfur</keyword>
<keyword id="KW-0472">Membrane</keyword>
<keyword id="KW-0479">Metal-binding</keyword>
<keyword id="KW-0677">Repeat</keyword>
<keyword id="KW-1278">Translocase</keyword>
<keyword id="KW-0813">Transport</keyword>
<feature type="chain" id="PRO_1000013655" description="Ion-translocating oxidoreductase complex subunit B">
    <location>
        <begin position="1"/>
        <end position="193"/>
    </location>
</feature>
<feature type="domain" description="4Fe-4S" evidence="1">
    <location>
        <begin position="32"/>
        <end position="90"/>
    </location>
</feature>
<feature type="domain" description="4Fe-4S ferredoxin-type 1" evidence="1">
    <location>
        <begin position="105"/>
        <end position="134"/>
    </location>
</feature>
<feature type="domain" description="4Fe-4S ferredoxin-type 2" evidence="1">
    <location>
        <begin position="136"/>
        <end position="164"/>
    </location>
</feature>
<feature type="region of interest" description="Hydrophobic" evidence="1">
    <location>
        <begin position="1"/>
        <end position="26"/>
    </location>
</feature>
<feature type="binding site" evidence="1">
    <location>
        <position position="49"/>
    </location>
    <ligand>
        <name>[4Fe-4S] cluster</name>
        <dbReference type="ChEBI" id="CHEBI:49883"/>
        <label>1</label>
    </ligand>
</feature>
<feature type="binding site" evidence="1">
    <location>
        <position position="52"/>
    </location>
    <ligand>
        <name>[4Fe-4S] cluster</name>
        <dbReference type="ChEBI" id="CHEBI:49883"/>
        <label>1</label>
    </ligand>
</feature>
<feature type="binding site" evidence="1">
    <location>
        <position position="57"/>
    </location>
    <ligand>
        <name>[4Fe-4S] cluster</name>
        <dbReference type="ChEBI" id="CHEBI:49883"/>
        <label>1</label>
    </ligand>
</feature>
<feature type="binding site" evidence="1">
    <location>
        <position position="73"/>
    </location>
    <ligand>
        <name>[4Fe-4S] cluster</name>
        <dbReference type="ChEBI" id="CHEBI:49883"/>
        <label>1</label>
    </ligand>
</feature>
<feature type="binding site" evidence="1">
    <location>
        <position position="114"/>
    </location>
    <ligand>
        <name>[4Fe-4S] cluster</name>
        <dbReference type="ChEBI" id="CHEBI:49883"/>
        <label>2</label>
    </ligand>
</feature>
<feature type="binding site" evidence="1">
    <location>
        <position position="117"/>
    </location>
    <ligand>
        <name>[4Fe-4S] cluster</name>
        <dbReference type="ChEBI" id="CHEBI:49883"/>
        <label>2</label>
    </ligand>
</feature>
<feature type="binding site" evidence="1">
    <location>
        <position position="120"/>
    </location>
    <ligand>
        <name>[4Fe-4S] cluster</name>
        <dbReference type="ChEBI" id="CHEBI:49883"/>
        <label>2</label>
    </ligand>
</feature>
<feature type="binding site" evidence="1">
    <location>
        <position position="124"/>
    </location>
    <ligand>
        <name>[4Fe-4S] cluster</name>
        <dbReference type="ChEBI" id="CHEBI:49883"/>
        <label>3</label>
    </ligand>
</feature>
<feature type="binding site" evidence="1">
    <location>
        <position position="144"/>
    </location>
    <ligand>
        <name>[4Fe-4S] cluster</name>
        <dbReference type="ChEBI" id="CHEBI:49883"/>
        <label>3</label>
    </ligand>
</feature>
<feature type="binding site" evidence="1">
    <location>
        <position position="147"/>
    </location>
    <ligand>
        <name>[4Fe-4S] cluster</name>
        <dbReference type="ChEBI" id="CHEBI:49883"/>
        <label>3</label>
    </ligand>
</feature>
<feature type="binding site" evidence="1">
    <location>
        <position position="150"/>
    </location>
    <ligand>
        <name>[4Fe-4S] cluster</name>
        <dbReference type="ChEBI" id="CHEBI:49883"/>
        <label>3</label>
    </ligand>
</feature>
<feature type="binding site" evidence="1">
    <location>
        <position position="154"/>
    </location>
    <ligand>
        <name>[4Fe-4S] cluster</name>
        <dbReference type="ChEBI" id="CHEBI:49883"/>
        <label>2</label>
    </ligand>
</feature>
<evidence type="ECO:0000255" key="1">
    <source>
        <dbReference type="HAMAP-Rule" id="MF_00463"/>
    </source>
</evidence>
<reference key="1">
    <citation type="submission" date="2006-09" db="EMBL/GenBank/DDBJ databases">
        <title>Complete sequence of chromosome 1 of Shewanella sp. ANA-3.</title>
        <authorList>
            <person name="Copeland A."/>
            <person name="Lucas S."/>
            <person name="Lapidus A."/>
            <person name="Barry K."/>
            <person name="Detter J.C."/>
            <person name="Glavina del Rio T."/>
            <person name="Hammon N."/>
            <person name="Israni S."/>
            <person name="Dalin E."/>
            <person name="Tice H."/>
            <person name="Pitluck S."/>
            <person name="Chertkov O."/>
            <person name="Brettin T."/>
            <person name="Bruce D."/>
            <person name="Han C."/>
            <person name="Tapia R."/>
            <person name="Gilna P."/>
            <person name="Schmutz J."/>
            <person name="Larimer F."/>
            <person name="Land M."/>
            <person name="Hauser L."/>
            <person name="Kyrpides N."/>
            <person name="Kim E."/>
            <person name="Newman D."/>
            <person name="Salticov C."/>
            <person name="Konstantinidis K."/>
            <person name="Klappenback J."/>
            <person name="Tiedje J."/>
            <person name="Richardson P."/>
        </authorList>
    </citation>
    <scope>NUCLEOTIDE SEQUENCE [LARGE SCALE GENOMIC DNA]</scope>
    <source>
        <strain>ANA-3</strain>
    </source>
</reference>
<dbReference type="EC" id="7.-.-.-" evidence="1"/>
<dbReference type="EMBL" id="CP000469">
    <property type="protein sequence ID" value="ABK48399.1"/>
    <property type="molecule type" value="Genomic_DNA"/>
</dbReference>
<dbReference type="STRING" id="94122.Shewana3_2169"/>
<dbReference type="KEGG" id="shn:Shewana3_2169"/>
<dbReference type="eggNOG" id="COG2878">
    <property type="taxonomic scope" value="Bacteria"/>
</dbReference>
<dbReference type="HOGENOM" id="CLU_063448_2_0_6"/>
<dbReference type="OrthoDB" id="9789936at2"/>
<dbReference type="Proteomes" id="UP000002589">
    <property type="component" value="Chromosome"/>
</dbReference>
<dbReference type="GO" id="GO:0005886">
    <property type="term" value="C:plasma membrane"/>
    <property type="evidence" value="ECO:0007669"/>
    <property type="project" value="UniProtKB-SubCell"/>
</dbReference>
<dbReference type="GO" id="GO:0051539">
    <property type="term" value="F:4 iron, 4 sulfur cluster binding"/>
    <property type="evidence" value="ECO:0007669"/>
    <property type="project" value="UniProtKB-UniRule"/>
</dbReference>
<dbReference type="GO" id="GO:0009055">
    <property type="term" value="F:electron transfer activity"/>
    <property type="evidence" value="ECO:0007669"/>
    <property type="project" value="InterPro"/>
</dbReference>
<dbReference type="GO" id="GO:0046872">
    <property type="term" value="F:metal ion binding"/>
    <property type="evidence" value="ECO:0007669"/>
    <property type="project" value="UniProtKB-KW"/>
</dbReference>
<dbReference type="GO" id="GO:0022900">
    <property type="term" value="P:electron transport chain"/>
    <property type="evidence" value="ECO:0007669"/>
    <property type="project" value="UniProtKB-UniRule"/>
</dbReference>
<dbReference type="FunFam" id="1.10.15.40:FF:000001">
    <property type="entry name" value="Ion-translocating oxidoreductase complex subunit B"/>
    <property type="match status" value="1"/>
</dbReference>
<dbReference type="Gene3D" id="3.30.70.20">
    <property type="match status" value="2"/>
</dbReference>
<dbReference type="Gene3D" id="1.10.15.40">
    <property type="entry name" value="Electron transport complex subunit B, putative Fe-S cluster"/>
    <property type="match status" value="1"/>
</dbReference>
<dbReference type="HAMAP" id="MF_00463">
    <property type="entry name" value="RsxB_RnfB"/>
    <property type="match status" value="1"/>
</dbReference>
<dbReference type="InterPro" id="IPR007202">
    <property type="entry name" value="4Fe-4S_dom"/>
</dbReference>
<dbReference type="InterPro" id="IPR017896">
    <property type="entry name" value="4Fe4S_Fe-S-bd"/>
</dbReference>
<dbReference type="InterPro" id="IPR017900">
    <property type="entry name" value="4Fe4S_Fe_S_CS"/>
</dbReference>
<dbReference type="InterPro" id="IPR010207">
    <property type="entry name" value="Elect_transpt_cplx_RnfB/RsxB"/>
</dbReference>
<dbReference type="InterPro" id="IPR016463">
    <property type="entry name" value="RnfB/RsxB_Proteobac"/>
</dbReference>
<dbReference type="InterPro" id="IPR050294">
    <property type="entry name" value="RnfB_subfamily"/>
</dbReference>
<dbReference type="NCBIfam" id="NF003475">
    <property type="entry name" value="PRK05113.1"/>
    <property type="match status" value="1"/>
</dbReference>
<dbReference type="NCBIfam" id="TIGR01944">
    <property type="entry name" value="rnfB"/>
    <property type="match status" value="1"/>
</dbReference>
<dbReference type="PANTHER" id="PTHR42859:SF3">
    <property type="entry name" value="ION-TRANSLOCATING OXIDOREDUCTASE COMPLEX SUBUNIT B"/>
    <property type="match status" value="1"/>
</dbReference>
<dbReference type="PANTHER" id="PTHR42859">
    <property type="entry name" value="OXIDOREDUCTASE"/>
    <property type="match status" value="1"/>
</dbReference>
<dbReference type="Pfam" id="PF14697">
    <property type="entry name" value="Fer4_21"/>
    <property type="match status" value="1"/>
</dbReference>
<dbReference type="Pfam" id="PF04060">
    <property type="entry name" value="FeS"/>
    <property type="match status" value="1"/>
</dbReference>
<dbReference type="PIRSF" id="PIRSF005784">
    <property type="entry name" value="Elect_transpt_RnfB"/>
    <property type="match status" value="1"/>
</dbReference>
<dbReference type="SUPFAM" id="SSF54862">
    <property type="entry name" value="4Fe-4S ferredoxins"/>
    <property type="match status" value="1"/>
</dbReference>
<dbReference type="PROSITE" id="PS51656">
    <property type="entry name" value="4FE4S"/>
    <property type="match status" value="1"/>
</dbReference>
<dbReference type="PROSITE" id="PS00198">
    <property type="entry name" value="4FE4S_FER_1"/>
    <property type="match status" value="2"/>
</dbReference>
<dbReference type="PROSITE" id="PS51379">
    <property type="entry name" value="4FE4S_FER_2"/>
    <property type="match status" value="2"/>
</dbReference>
<gene>
    <name evidence="1" type="primary">rnfB</name>
    <name type="ordered locus">Shewana3_2169</name>
</gene>
<organism>
    <name type="scientific">Shewanella sp. (strain ANA-3)</name>
    <dbReference type="NCBI Taxonomy" id="94122"/>
    <lineage>
        <taxon>Bacteria</taxon>
        <taxon>Pseudomonadati</taxon>
        <taxon>Pseudomonadota</taxon>
        <taxon>Gammaproteobacteria</taxon>
        <taxon>Alteromonadales</taxon>
        <taxon>Shewanellaceae</taxon>
        <taxon>Shewanella</taxon>
    </lineage>
</organism>